<reference key="1">
    <citation type="journal article" date="2005" name="Science">
        <title>The genome of the basidiomycetous yeast and human pathogen Cryptococcus neoformans.</title>
        <authorList>
            <person name="Loftus B.J."/>
            <person name="Fung E."/>
            <person name="Roncaglia P."/>
            <person name="Rowley D."/>
            <person name="Amedeo P."/>
            <person name="Bruno D."/>
            <person name="Vamathevan J."/>
            <person name="Miranda M."/>
            <person name="Anderson I.J."/>
            <person name="Fraser J.A."/>
            <person name="Allen J.E."/>
            <person name="Bosdet I.E."/>
            <person name="Brent M.R."/>
            <person name="Chiu R."/>
            <person name="Doering T.L."/>
            <person name="Donlin M.J."/>
            <person name="D'Souza C.A."/>
            <person name="Fox D.S."/>
            <person name="Grinberg V."/>
            <person name="Fu J."/>
            <person name="Fukushima M."/>
            <person name="Haas B.J."/>
            <person name="Huang J.C."/>
            <person name="Janbon G."/>
            <person name="Jones S.J.M."/>
            <person name="Koo H.L."/>
            <person name="Krzywinski M.I."/>
            <person name="Kwon-Chung K.J."/>
            <person name="Lengeler K.B."/>
            <person name="Maiti R."/>
            <person name="Marra M.A."/>
            <person name="Marra R.E."/>
            <person name="Mathewson C.A."/>
            <person name="Mitchell T.G."/>
            <person name="Pertea M."/>
            <person name="Riggs F.R."/>
            <person name="Salzberg S.L."/>
            <person name="Schein J.E."/>
            <person name="Shvartsbeyn A."/>
            <person name="Shin H."/>
            <person name="Shumway M."/>
            <person name="Specht C.A."/>
            <person name="Suh B.B."/>
            <person name="Tenney A."/>
            <person name="Utterback T.R."/>
            <person name="Wickes B.L."/>
            <person name="Wortman J.R."/>
            <person name="Wye N.H."/>
            <person name="Kronstad J.W."/>
            <person name="Lodge J.K."/>
            <person name="Heitman J."/>
            <person name="Davis R.W."/>
            <person name="Fraser C.M."/>
            <person name="Hyman R.W."/>
        </authorList>
    </citation>
    <scope>NUCLEOTIDE SEQUENCE [LARGE SCALE GENOMIC DNA]</scope>
    <source>
        <strain>B-3501A</strain>
    </source>
</reference>
<accession>P0CN87</accession>
<accession>Q55NN6</accession>
<accession>Q5KC22</accession>
<name>TRPG_CRYNB</name>
<evidence type="ECO:0000250" key="1"/>
<evidence type="ECO:0000250" key="2">
    <source>
        <dbReference type="UniProtKB" id="P00900"/>
    </source>
</evidence>
<dbReference type="EC" id="4.1.3.27"/>
<dbReference type="EC" id="4.1.1.48"/>
<dbReference type="EC" id="5.3.1.24"/>
<dbReference type="EMBL" id="AAEY01000041">
    <property type="protein sequence ID" value="EAL19359.1"/>
    <property type="molecule type" value="Genomic_DNA"/>
</dbReference>
<dbReference type="RefSeq" id="XP_774006.1">
    <property type="nucleotide sequence ID" value="XM_768913.1"/>
</dbReference>
<dbReference type="SMR" id="P0CN87"/>
<dbReference type="MEROPS" id="C26.959"/>
<dbReference type="GeneID" id="4937569"/>
<dbReference type="KEGG" id="cnb:CNBH0530"/>
<dbReference type="VEuPathDB" id="FungiDB:CNBH0530"/>
<dbReference type="HOGENOM" id="CLU_007713_2_0_1"/>
<dbReference type="OrthoDB" id="3696at5206"/>
<dbReference type="UniPathway" id="UPA00035">
    <property type="reaction ID" value="UER00040"/>
</dbReference>
<dbReference type="UniPathway" id="UPA00035">
    <property type="reaction ID" value="UER00042"/>
</dbReference>
<dbReference type="UniPathway" id="UPA00035">
    <property type="reaction ID" value="UER00043"/>
</dbReference>
<dbReference type="GO" id="GO:0004049">
    <property type="term" value="F:anthranilate synthase activity"/>
    <property type="evidence" value="ECO:0007669"/>
    <property type="project" value="UniProtKB-EC"/>
</dbReference>
<dbReference type="GO" id="GO:0004425">
    <property type="term" value="F:indole-3-glycerol-phosphate synthase activity"/>
    <property type="evidence" value="ECO:0007669"/>
    <property type="project" value="UniProtKB-EC"/>
</dbReference>
<dbReference type="GO" id="GO:0004640">
    <property type="term" value="F:phosphoribosylanthranilate isomerase activity"/>
    <property type="evidence" value="ECO:0007669"/>
    <property type="project" value="UniProtKB-EC"/>
</dbReference>
<dbReference type="GO" id="GO:0000162">
    <property type="term" value="P:L-tryptophan biosynthetic process"/>
    <property type="evidence" value="ECO:0007669"/>
    <property type="project" value="UniProtKB-UniPathway"/>
</dbReference>
<dbReference type="CDD" id="cd01743">
    <property type="entry name" value="GATase1_Anthranilate_Synthase"/>
    <property type="match status" value="1"/>
</dbReference>
<dbReference type="CDD" id="cd00331">
    <property type="entry name" value="IGPS"/>
    <property type="match status" value="1"/>
</dbReference>
<dbReference type="CDD" id="cd00405">
    <property type="entry name" value="PRAI"/>
    <property type="match status" value="1"/>
</dbReference>
<dbReference type="FunFam" id="3.20.20.70:FF:000136">
    <property type="entry name" value="Multifunctional tryptophan biosynthesis protein"/>
    <property type="match status" value="1"/>
</dbReference>
<dbReference type="FunFam" id="3.40.50.880:FF:000031">
    <property type="entry name" value="Multifunctional tryptophan biosynthesis protein"/>
    <property type="match status" value="1"/>
</dbReference>
<dbReference type="Gene3D" id="3.40.50.880">
    <property type="match status" value="1"/>
</dbReference>
<dbReference type="Gene3D" id="3.20.20.70">
    <property type="entry name" value="Aldolase class I"/>
    <property type="match status" value="2"/>
</dbReference>
<dbReference type="HAMAP" id="MF_00135">
    <property type="entry name" value="PRAI"/>
    <property type="match status" value="1"/>
</dbReference>
<dbReference type="InterPro" id="IPR013785">
    <property type="entry name" value="Aldolase_TIM"/>
</dbReference>
<dbReference type="InterPro" id="IPR016302">
    <property type="entry name" value="Anthranilate_synth_II"/>
</dbReference>
<dbReference type="InterPro" id="IPR029062">
    <property type="entry name" value="Class_I_gatase-like"/>
</dbReference>
<dbReference type="InterPro" id="IPR017926">
    <property type="entry name" value="GATASE"/>
</dbReference>
<dbReference type="InterPro" id="IPR045186">
    <property type="entry name" value="Indole-3-glycerol_P_synth"/>
</dbReference>
<dbReference type="InterPro" id="IPR013798">
    <property type="entry name" value="Indole-3-glycerol_P_synth_dom"/>
</dbReference>
<dbReference type="InterPro" id="IPR001468">
    <property type="entry name" value="Indole-3-GlycerolPSynthase_CS"/>
</dbReference>
<dbReference type="InterPro" id="IPR001240">
    <property type="entry name" value="PRAI_dom"/>
</dbReference>
<dbReference type="InterPro" id="IPR011060">
    <property type="entry name" value="RibuloseP-bd_barrel"/>
</dbReference>
<dbReference type="InterPro" id="IPR006221">
    <property type="entry name" value="TrpG/PapA_dom"/>
</dbReference>
<dbReference type="NCBIfam" id="TIGR00566">
    <property type="entry name" value="trpG_papA"/>
    <property type="match status" value="1"/>
</dbReference>
<dbReference type="PANTHER" id="PTHR22854:SF2">
    <property type="entry name" value="INDOLE-3-GLYCEROL-PHOSPHATE SYNTHASE"/>
    <property type="match status" value="1"/>
</dbReference>
<dbReference type="PANTHER" id="PTHR22854">
    <property type="entry name" value="TRYPTOPHAN BIOSYNTHESIS PROTEIN"/>
    <property type="match status" value="1"/>
</dbReference>
<dbReference type="Pfam" id="PF00117">
    <property type="entry name" value="GATase"/>
    <property type="match status" value="1"/>
</dbReference>
<dbReference type="Pfam" id="PF00218">
    <property type="entry name" value="IGPS"/>
    <property type="match status" value="1"/>
</dbReference>
<dbReference type="Pfam" id="PF00697">
    <property type="entry name" value="PRAI"/>
    <property type="match status" value="1"/>
</dbReference>
<dbReference type="PIRSF" id="PIRSF001382">
    <property type="entry name" value="TrpG-trpC-trpF"/>
    <property type="match status" value="1"/>
</dbReference>
<dbReference type="PRINTS" id="PR00097">
    <property type="entry name" value="ANTSNTHASEII"/>
</dbReference>
<dbReference type="PRINTS" id="PR00096">
    <property type="entry name" value="GATASE"/>
</dbReference>
<dbReference type="SUPFAM" id="SSF52317">
    <property type="entry name" value="Class I glutamine amidotransferase-like"/>
    <property type="match status" value="1"/>
</dbReference>
<dbReference type="SUPFAM" id="SSF51366">
    <property type="entry name" value="Ribulose-phoshate binding barrel"/>
    <property type="match status" value="2"/>
</dbReference>
<dbReference type="PROSITE" id="PS51273">
    <property type="entry name" value="GATASE_TYPE_1"/>
    <property type="match status" value="1"/>
</dbReference>
<dbReference type="PROSITE" id="PS00614">
    <property type="entry name" value="IGPS"/>
    <property type="match status" value="1"/>
</dbReference>
<feature type="chain" id="PRO_0000410098" description="Multifunctional tryptophan biosynthesis protein">
    <location>
        <begin position="1"/>
        <end position="752"/>
    </location>
</feature>
<feature type="domain" description="Glutamine amidotransferase type-1">
    <location>
        <begin position="3"/>
        <end position="202"/>
    </location>
</feature>
<feature type="region of interest" description="Indole-3-glycerol phosphate synthase">
    <location>
        <begin position="231"/>
        <end position="495"/>
    </location>
</feature>
<feature type="region of interest" description="N-(5'-phosphoribosyl)anthranilate isomerase">
    <location>
        <begin position="509"/>
        <end position="752"/>
    </location>
</feature>
<feature type="active site" description="Nucleophile; for GATase activity" evidence="2">
    <location>
        <position position="86"/>
    </location>
</feature>
<feature type="active site" description="For GATase activity" evidence="1">
    <location>
        <position position="176"/>
    </location>
</feature>
<feature type="active site" description="For GATase activity" evidence="1">
    <location>
        <position position="178"/>
    </location>
</feature>
<feature type="binding site" evidence="2">
    <location>
        <begin position="58"/>
        <end position="60"/>
    </location>
    <ligand>
        <name>L-glutamine</name>
        <dbReference type="ChEBI" id="CHEBI:58359"/>
    </ligand>
</feature>
<feature type="binding site" evidence="2">
    <location>
        <begin position="136"/>
        <end position="137"/>
    </location>
    <ligand>
        <name>L-glutamine</name>
        <dbReference type="ChEBI" id="CHEBI:58359"/>
    </ligand>
</feature>
<sequence>MGFTLLIDNYDSFTWNIYADLASVGGNPYVVRNDKITLKEIEGMFSDGELERIVISPGPGHPRTDSGVSRDVIAWGMGKLPILGVCMGLECIVDLLGGEIAYAGEIKHGKTSLVQHDSIGVFHNLPQFLSSTRYHSLSAQIQSLPSVLQVTSTTKESGVIMGVRHRTYTVEAVQYHPESCMSEGGRGLMANFIQMKGGKWGGENAWCGVPAEGEEEQPKAKTNGAPSLPTILNRIHAQRLLDVEQAEKVPATSPANVSTSLSLYASPPLINFRDRMVSTPHTAVMAEIKRASPSKGDIAPTASAPEQALKYALAGASVISVLTEPTWFKGSLLDMLAVRNAVDSLPNRPAILRKDFVLSKYMIDEARLYGADTVLLIVAMLEPQQLKELYDYSVSLGMEPLVEVNNPTELSLALEIGSKVIGVNNRNLHDFNVDMSTTSRVNAALNGRDVVLCALSGISSHEDVEKYVKEGVKGVLVGEALMRASDTKAFLRSLIGLPPLEVVPKSRPLVKICGIRSTDDAKLAISAGADLLGVILVPGTKRCISTSTAREISALVQSARSQSSSKPLEPSLSSPWFTTQSDLLSSRRKPLLVGVFQNQSLSDILSAVEEIGLNLVQLHGDEPQAWAKFIPVPVVKVFRVSPEGIVRGGEIRRPGLNQAILLDAGGVSGGGGEGKAFPWEHAKRLIQSGEVGSEGHMPLPVILAGGLTPENVGQAIEQAGEGVWCVDVSSGVEGEGGKVKEKVEAFVKAVRG</sequence>
<gene>
    <name type="primary">TRP1</name>
    <name type="ordered locus">CNBH0530</name>
</gene>
<protein>
    <recommendedName>
        <fullName>Multifunctional tryptophan biosynthesis protein</fullName>
    </recommendedName>
    <domain>
        <recommendedName>
            <fullName>Anthranilate synthase component 2</fullName>
            <shortName>AS</shortName>
            <ecNumber>4.1.3.27</ecNumber>
        </recommendedName>
        <alternativeName>
            <fullName>Anthranilate synthase, glutamine amidotransferase component</fullName>
        </alternativeName>
    </domain>
    <domain>
        <recommendedName>
            <fullName>Indole-3-glycerol phosphate synthase</fullName>
            <shortName>IGPS</shortName>
            <ecNumber>4.1.1.48</ecNumber>
        </recommendedName>
    </domain>
    <domain>
        <recommendedName>
            <fullName>N-(5'-phosphoribosyl)anthranilate isomerase</fullName>
            <shortName>PRAI</shortName>
            <ecNumber>5.3.1.24</ecNumber>
        </recommendedName>
    </domain>
</protein>
<organism>
    <name type="scientific">Cryptococcus neoformans var. neoformans serotype D (strain B-3501A)</name>
    <name type="common">Filobasidiella neoformans</name>
    <dbReference type="NCBI Taxonomy" id="283643"/>
    <lineage>
        <taxon>Eukaryota</taxon>
        <taxon>Fungi</taxon>
        <taxon>Dikarya</taxon>
        <taxon>Basidiomycota</taxon>
        <taxon>Agaricomycotina</taxon>
        <taxon>Tremellomycetes</taxon>
        <taxon>Tremellales</taxon>
        <taxon>Cryptococcaceae</taxon>
        <taxon>Cryptococcus</taxon>
        <taxon>Cryptococcus neoformans species complex</taxon>
    </lineage>
</organism>
<comment type="function">
    <text>Trifunctional enzyme bearing the Gln amidotransferase (GATase) domain of anthranilate synthase, indole-glycerolphosphate synthase, and phosphoribosylanthranilate isomerase activities.</text>
</comment>
<comment type="catalytic activity">
    <reaction>
        <text>N-(5-phospho-beta-D-ribosyl)anthranilate = 1-(2-carboxyphenylamino)-1-deoxy-D-ribulose 5-phosphate</text>
        <dbReference type="Rhea" id="RHEA:21540"/>
        <dbReference type="ChEBI" id="CHEBI:18277"/>
        <dbReference type="ChEBI" id="CHEBI:58613"/>
        <dbReference type="EC" id="5.3.1.24"/>
    </reaction>
</comment>
<comment type="catalytic activity">
    <reaction>
        <text>1-(2-carboxyphenylamino)-1-deoxy-D-ribulose 5-phosphate + H(+) = (1S,2R)-1-C-(indol-3-yl)glycerol 3-phosphate + CO2 + H2O</text>
        <dbReference type="Rhea" id="RHEA:23476"/>
        <dbReference type="ChEBI" id="CHEBI:15377"/>
        <dbReference type="ChEBI" id="CHEBI:15378"/>
        <dbReference type="ChEBI" id="CHEBI:16526"/>
        <dbReference type="ChEBI" id="CHEBI:58613"/>
        <dbReference type="ChEBI" id="CHEBI:58866"/>
        <dbReference type="EC" id="4.1.1.48"/>
    </reaction>
</comment>
<comment type="catalytic activity">
    <reaction>
        <text>chorismate + L-glutamine = anthranilate + pyruvate + L-glutamate + H(+)</text>
        <dbReference type="Rhea" id="RHEA:21732"/>
        <dbReference type="ChEBI" id="CHEBI:15361"/>
        <dbReference type="ChEBI" id="CHEBI:15378"/>
        <dbReference type="ChEBI" id="CHEBI:16567"/>
        <dbReference type="ChEBI" id="CHEBI:29748"/>
        <dbReference type="ChEBI" id="CHEBI:29985"/>
        <dbReference type="ChEBI" id="CHEBI:58359"/>
        <dbReference type="EC" id="4.1.3.27"/>
    </reaction>
</comment>
<comment type="pathway">
    <text>Amino-acid biosynthesis; L-tryptophan biosynthesis; L-tryptophan from chorismate: step 1/5.</text>
</comment>
<comment type="pathway">
    <text>Amino-acid biosynthesis; L-tryptophan biosynthesis; L-tryptophan from chorismate: step 3/5.</text>
</comment>
<comment type="pathway">
    <text>Amino-acid biosynthesis; L-tryptophan biosynthesis; L-tryptophan from chorismate: step 4/5.</text>
</comment>
<keyword id="KW-0028">Amino-acid biosynthesis</keyword>
<keyword id="KW-0057">Aromatic amino acid biosynthesis</keyword>
<keyword id="KW-0210">Decarboxylase</keyword>
<keyword id="KW-0315">Glutamine amidotransferase</keyword>
<keyword id="KW-0413">Isomerase</keyword>
<keyword id="KW-0456">Lyase</keyword>
<keyword id="KW-0511">Multifunctional enzyme</keyword>
<keyword id="KW-0822">Tryptophan biosynthesis</keyword>
<proteinExistence type="inferred from homology"/>